<dbReference type="EC" id="1.2.1.3" evidence="8"/>
<dbReference type="EC" id="1.2.1.64" evidence="10 11"/>
<dbReference type="EMBL" id="Z49702">
    <property type="protein sequence ID" value="CAA89746.1"/>
    <property type="molecule type" value="Genomic_DNA"/>
</dbReference>
<dbReference type="EMBL" id="BK006946">
    <property type="protein sequence ID" value="DAA10007.1"/>
    <property type="molecule type" value="Genomic_DNA"/>
</dbReference>
<dbReference type="PIR" id="S54571">
    <property type="entry name" value="S54571"/>
</dbReference>
<dbReference type="RefSeq" id="NP_013828.1">
    <property type="nucleotide sequence ID" value="NM_001182610.1"/>
</dbReference>
<dbReference type="SMR" id="Q04458"/>
<dbReference type="BioGRID" id="35286">
    <property type="interactions" value="92"/>
</dbReference>
<dbReference type="DIP" id="DIP-4437N"/>
<dbReference type="FunCoup" id="Q04458">
    <property type="interactions" value="618"/>
</dbReference>
<dbReference type="IntAct" id="Q04458">
    <property type="interactions" value="12"/>
</dbReference>
<dbReference type="MINT" id="Q04458"/>
<dbReference type="STRING" id="4932.YMR110C"/>
<dbReference type="SwissLipids" id="SLP:000000197"/>
<dbReference type="SwissLipids" id="SLP:000000241"/>
<dbReference type="iPTMnet" id="Q04458"/>
<dbReference type="PaxDb" id="4932-YMR110C"/>
<dbReference type="PeptideAtlas" id="Q04458"/>
<dbReference type="EnsemblFungi" id="YMR110C_mRNA">
    <property type="protein sequence ID" value="YMR110C"/>
    <property type="gene ID" value="YMR110C"/>
</dbReference>
<dbReference type="GeneID" id="855137"/>
<dbReference type="KEGG" id="sce:YMR110C"/>
<dbReference type="AGR" id="SGD:S000004716"/>
<dbReference type="SGD" id="S000004716">
    <property type="gene designation" value="HFD1"/>
</dbReference>
<dbReference type="VEuPathDB" id="FungiDB:YMR110C"/>
<dbReference type="eggNOG" id="KOG2456">
    <property type="taxonomic scope" value="Eukaryota"/>
</dbReference>
<dbReference type="GeneTree" id="ENSGT00940000167857"/>
<dbReference type="HOGENOM" id="CLU_005391_3_1_1"/>
<dbReference type="InParanoid" id="Q04458"/>
<dbReference type="OMA" id="EIDWCKQ"/>
<dbReference type="OrthoDB" id="440325at2759"/>
<dbReference type="BioCyc" id="MetaCyc:G3O-32806-MONOMER"/>
<dbReference type="BioCyc" id="YEAST:G3O-32806-MONOMER"/>
<dbReference type="Reactome" id="R-SCE-211945">
    <property type="pathway name" value="Phase I - Functionalization of compounds"/>
</dbReference>
<dbReference type="Reactome" id="R-SCE-389599">
    <property type="pathway name" value="Alpha-oxidation of phytanate"/>
</dbReference>
<dbReference type="Reactome" id="R-SCE-6798695">
    <property type="pathway name" value="Neutrophil degranulation"/>
</dbReference>
<dbReference type="Reactome" id="R-SCE-9603798">
    <property type="pathway name" value="Class I peroxisomal membrane protein import"/>
</dbReference>
<dbReference type="Reactome" id="R-SCE-9609523">
    <property type="pathway name" value="Insertion of tail-anchored proteins into the endoplasmic reticulum membrane"/>
</dbReference>
<dbReference type="Reactome" id="R-SCE-9696270">
    <property type="pathway name" value="RND2 GTPase cycle"/>
</dbReference>
<dbReference type="Reactome" id="R-SCE-9696273">
    <property type="pathway name" value="RND1 GTPase cycle"/>
</dbReference>
<dbReference type="Reactome" id="R-SCE-9845614">
    <property type="pathway name" value="Sphingolipid catabolism"/>
</dbReference>
<dbReference type="BioGRID-ORCS" id="855137">
    <property type="hits" value="0 hits in 10 CRISPR screens"/>
</dbReference>
<dbReference type="PRO" id="PR:Q04458"/>
<dbReference type="Proteomes" id="UP000002311">
    <property type="component" value="Chromosome XIII"/>
</dbReference>
<dbReference type="RNAct" id="Q04458">
    <property type="molecule type" value="protein"/>
</dbReference>
<dbReference type="GO" id="GO:0005737">
    <property type="term" value="C:cytoplasm"/>
    <property type="evidence" value="ECO:0000318"/>
    <property type="project" value="GO_Central"/>
</dbReference>
<dbReference type="GO" id="GO:0005783">
    <property type="term" value="C:endoplasmic reticulum"/>
    <property type="evidence" value="ECO:0007005"/>
    <property type="project" value="SGD"/>
</dbReference>
<dbReference type="GO" id="GO:0005768">
    <property type="term" value="C:endosome"/>
    <property type="evidence" value="ECO:0007005"/>
    <property type="project" value="SGD"/>
</dbReference>
<dbReference type="GO" id="GO:0010008">
    <property type="term" value="C:endosome membrane"/>
    <property type="evidence" value="ECO:0007669"/>
    <property type="project" value="UniProtKB-SubCell"/>
</dbReference>
<dbReference type="GO" id="GO:0005811">
    <property type="term" value="C:lipid droplet"/>
    <property type="evidence" value="ECO:0000314"/>
    <property type="project" value="SGD"/>
</dbReference>
<dbReference type="GO" id="GO:0005741">
    <property type="term" value="C:mitochondrial outer membrane"/>
    <property type="evidence" value="ECO:0000314"/>
    <property type="project" value="SGD"/>
</dbReference>
<dbReference type="GO" id="GO:0005739">
    <property type="term" value="C:mitochondrion"/>
    <property type="evidence" value="ECO:0007005"/>
    <property type="project" value="SGD"/>
</dbReference>
<dbReference type="GO" id="GO:0018484">
    <property type="term" value="F:4-hydroxybenzaldehyde dehydrogenase (NAD+) activity"/>
    <property type="evidence" value="ECO:0000315"/>
    <property type="project" value="SGD"/>
</dbReference>
<dbReference type="GO" id="GO:0004029">
    <property type="term" value="F:aldehyde dehydrogenase (NAD+) activity"/>
    <property type="evidence" value="ECO:0000318"/>
    <property type="project" value="GO_Central"/>
</dbReference>
<dbReference type="GO" id="GO:0047770">
    <property type="term" value="F:carboxylate reductase activity"/>
    <property type="evidence" value="ECO:0000315"/>
    <property type="project" value="SGD"/>
</dbReference>
<dbReference type="GO" id="GO:0046185">
    <property type="term" value="P:aldehyde catabolic process"/>
    <property type="evidence" value="ECO:0000315"/>
    <property type="project" value="SGD"/>
</dbReference>
<dbReference type="GO" id="GO:0006081">
    <property type="term" value="P:aldehyde metabolic process"/>
    <property type="evidence" value="ECO:0000315"/>
    <property type="project" value="SGD"/>
</dbReference>
<dbReference type="GO" id="GO:0006665">
    <property type="term" value="P:sphingolipid metabolic process"/>
    <property type="evidence" value="ECO:0000315"/>
    <property type="project" value="SGD"/>
</dbReference>
<dbReference type="GO" id="GO:0006744">
    <property type="term" value="P:ubiquinone biosynthetic process"/>
    <property type="evidence" value="ECO:0000315"/>
    <property type="project" value="SGD"/>
</dbReference>
<dbReference type="FunFam" id="3.40.605.10:FF:000004">
    <property type="entry name" value="Aldehyde dehydrogenase"/>
    <property type="match status" value="1"/>
</dbReference>
<dbReference type="Gene3D" id="3.40.605.10">
    <property type="entry name" value="Aldehyde Dehydrogenase, Chain A, domain 1"/>
    <property type="match status" value="1"/>
</dbReference>
<dbReference type="Gene3D" id="3.40.309.10">
    <property type="entry name" value="Aldehyde Dehydrogenase, Chain A, domain 2"/>
    <property type="match status" value="1"/>
</dbReference>
<dbReference type="InterPro" id="IPR016161">
    <property type="entry name" value="Ald_DH/histidinol_DH"/>
</dbReference>
<dbReference type="InterPro" id="IPR016163">
    <property type="entry name" value="Ald_DH_C"/>
</dbReference>
<dbReference type="InterPro" id="IPR029510">
    <property type="entry name" value="Ald_DH_CS_GLU"/>
</dbReference>
<dbReference type="InterPro" id="IPR016162">
    <property type="entry name" value="Ald_DH_N"/>
</dbReference>
<dbReference type="InterPro" id="IPR015590">
    <property type="entry name" value="Aldehyde_DH_dom"/>
</dbReference>
<dbReference type="InterPro" id="IPR012394">
    <property type="entry name" value="Aldehyde_DH_NAD(P)"/>
</dbReference>
<dbReference type="PANTHER" id="PTHR43570">
    <property type="entry name" value="ALDEHYDE DEHYDROGENASE"/>
    <property type="match status" value="1"/>
</dbReference>
<dbReference type="PANTHER" id="PTHR43570:SF16">
    <property type="entry name" value="ALDEHYDE DEHYDROGENASE TYPE III, ISOFORM Q"/>
    <property type="match status" value="1"/>
</dbReference>
<dbReference type="Pfam" id="PF00171">
    <property type="entry name" value="Aldedh"/>
    <property type="match status" value="1"/>
</dbReference>
<dbReference type="PIRSF" id="PIRSF036492">
    <property type="entry name" value="ALDH"/>
    <property type="match status" value="1"/>
</dbReference>
<dbReference type="SUPFAM" id="SSF53720">
    <property type="entry name" value="ALDH-like"/>
    <property type="match status" value="1"/>
</dbReference>
<dbReference type="PROSITE" id="PS00687">
    <property type="entry name" value="ALDEHYDE_DEHYDR_GLU"/>
    <property type="match status" value="1"/>
</dbReference>
<sequence length="532" mass="59979">MSNDGSKILNYTPVSKIDEIVEISRNFFFEKQLKLSHENNPRKKDLEFRQLQLKKLYYAVKDHEEELIDAMYKDFHRNKIESVLNETTKLMNDILHLIEILPKLIKPRRVSDSSPPFMFGKTIVEKISRGSVLIIAPFNFPLLLAFAPLAAALAAGNTIVLKPSELTPHTAVVMENLLTTAGFPDGLIQVVQGAIDETTRLLDCGKFDLIFYTGSPRVGSIVAEKAAKSLTPCVLELGGKSPTFITENFKASNIKIALKRIFFGAFGNSGQICVSPDYLLVHKSIYPKVIKECESVLNEFYPSFDEQTDFTRMIHEPAYKKAVASINSTNGSKIVPSKISINSDTEDLCLVPPTIVYNIGWDDPLMKQENFAPVLPIIEYEDLDETINKIIEEHDTPLVQYIFSDSQTEINRILTRLRSGDCVVGDTVIHVGITDAPFGGIGTSGYGNYGGYYGFNTFSHERTIFKQPYWNDFTLFMRYPPNSAQKEKLVRFAMERKPWFDRNGNNKWGLRQYFSLSAAVILISTIYAHCSS</sequence>
<proteinExistence type="evidence at protein level"/>
<protein>
    <recommendedName>
        <fullName>Fatty aldehyde dehydrogenase HFD1</fullName>
        <ecNumber evidence="8">1.2.1.3</ecNumber>
        <ecNumber evidence="10 11">1.2.1.64</ecNumber>
    </recommendedName>
    <alternativeName>
        <fullName evidence="13">Hexadecenal dehydrogenase</fullName>
    </alternativeName>
</protein>
<feature type="chain" id="PRO_0000056597" description="Fatty aldehyde dehydrogenase HFD1">
    <location>
        <begin position="1"/>
        <end position="532"/>
    </location>
</feature>
<feature type="transmembrane region" description="Helical" evidence="1">
    <location>
        <begin position="134"/>
        <end position="152"/>
    </location>
</feature>
<feature type="active site" evidence="2">
    <location>
        <position position="236"/>
    </location>
</feature>
<feature type="active site" evidence="2">
    <location>
        <position position="273"/>
    </location>
</feature>
<feature type="binding site" evidence="1">
    <location>
        <begin position="214"/>
        <end position="219"/>
    </location>
    <ligand>
        <name>NAD(+)</name>
        <dbReference type="ChEBI" id="CHEBI:57540"/>
    </ligand>
</feature>
<feature type="modified residue" description="Phosphoserine" evidence="16 17 18 19">
    <location>
        <position position="111"/>
    </location>
</feature>
<feature type="mutagenesis site" description="Causes Q deficiency." evidence="11">
    <original>S</original>
    <variation>L</variation>
    <location>
        <position position="241"/>
    </location>
</feature>
<feature type="mutagenesis site" description="Abolishes catalytic activity." evidence="10">
    <original>C</original>
    <variation>S</variation>
    <location>
        <position position="273"/>
    </location>
</feature>
<reference key="1">
    <citation type="journal article" date="1997" name="Nature">
        <title>The nucleotide sequence of Saccharomyces cerevisiae chromosome XIII.</title>
        <authorList>
            <person name="Bowman S."/>
            <person name="Churcher C.M."/>
            <person name="Badcock K."/>
            <person name="Brown D."/>
            <person name="Chillingworth T."/>
            <person name="Connor R."/>
            <person name="Dedman K."/>
            <person name="Devlin K."/>
            <person name="Gentles S."/>
            <person name="Hamlin N."/>
            <person name="Hunt S."/>
            <person name="Jagels K."/>
            <person name="Lye G."/>
            <person name="Moule S."/>
            <person name="Odell C."/>
            <person name="Pearson D."/>
            <person name="Rajandream M.A."/>
            <person name="Rice P."/>
            <person name="Skelton J."/>
            <person name="Walsh S.V."/>
            <person name="Whitehead S."/>
            <person name="Barrell B.G."/>
        </authorList>
    </citation>
    <scope>NUCLEOTIDE SEQUENCE [LARGE SCALE GENOMIC DNA]</scope>
    <source>
        <strain>ATCC 204508 / S288c</strain>
    </source>
</reference>
<reference key="2">
    <citation type="journal article" date="2014" name="G3 (Bethesda)">
        <title>The reference genome sequence of Saccharomyces cerevisiae: Then and now.</title>
        <authorList>
            <person name="Engel S.R."/>
            <person name="Dietrich F.S."/>
            <person name="Fisk D.G."/>
            <person name="Binkley G."/>
            <person name="Balakrishnan R."/>
            <person name="Costanzo M.C."/>
            <person name="Dwight S.S."/>
            <person name="Hitz B.C."/>
            <person name="Karra K."/>
            <person name="Nash R.S."/>
            <person name="Weng S."/>
            <person name="Wong E.D."/>
            <person name="Lloyd P."/>
            <person name="Skrzypek M.S."/>
            <person name="Miyasato S.R."/>
            <person name="Simison M."/>
            <person name="Cherry J.M."/>
        </authorList>
    </citation>
    <scope>GENOME REANNOTATION</scope>
    <source>
        <strain>ATCC 204508 / S288c</strain>
    </source>
</reference>
<reference key="3">
    <citation type="journal article" date="2003" name="Nature">
        <title>Global analysis of protein localization in budding yeast.</title>
        <authorList>
            <person name="Huh W.-K."/>
            <person name="Falvo J.V."/>
            <person name="Gerke L.C."/>
            <person name="Carroll A.S."/>
            <person name="Howson R.W."/>
            <person name="Weissman J.S."/>
            <person name="O'Shea E.K."/>
        </authorList>
    </citation>
    <scope>SUBCELLULAR LOCATION [LARGE SCALE ANALYSIS]</scope>
</reference>
<reference key="4">
    <citation type="journal article" date="2003" name="Nature">
        <title>Global analysis of protein expression in yeast.</title>
        <authorList>
            <person name="Ghaemmaghami S."/>
            <person name="Huh W.-K."/>
            <person name="Bower K."/>
            <person name="Howson R.W."/>
            <person name="Belle A."/>
            <person name="Dephoure N."/>
            <person name="O'Shea E.K."/>
            <person name="Weissman J.S."/>
        </authorList>
    </citation>
    <scope>LEVEL OF PROTEIN EXPRESSION [LARGE SCALE ANALYSIS]</scope>
</reference>
<reference key="5">
    <citation type="journal article" date="2003" name="Proc. Natl. Acad. Sci. U.S.A.">
        <title>The proteome of Saccharomyces cerevisiae mitochondria.</title>
        <authorList>
            <person name="Sickmann A."/>
            <person name="Reinders J."/>
            <person name="Wagner Y."/>
            <person name="Joppich C."/>
            <person name="Zahedi R.P."/>
            <person name="Meyer H.E."/>
            <person name="Schoenfisch B."/>
            <person name="Perschil I."/>
            <person name="Chacinska A."/>
            <person name="Guiard B."/>
            <person name="Rehling P."/>
            <person name="Pfanner N."/>
            <person name="Meisinger C."/>
        </authorList>
    </citation>
    <scope>SUBCELLULAR LOCATION [LARGE SCALE ANALYSIS]</scope>
    <source>
        <strain>ATCC 76625 / YPH499</strain>
    </source>
</reference>
<reference key="6">
    <citation type="journal article" date="2006" name="FEBS J.">
        <title>Integral membrane proteins in the mitochondrial outer membrane of Saccharomyces cerevisiae.</title>
        <authorList>
            <person name="Burri L."/>
            <person name="Vascotto K."/>
            <person name="Gentle I.E."/>
            <person name="Chan N.C."/>
            <person name="Beilharz T."/>
            <person name="Stapleton D.I."/>
            <person name="Ramage L."/>
            <person name="Lithgow T."/>
        </authorList>
    </citation>
    <scope>SUBCELLULAR LOCATION</scope>
    <scope>IDENTIFICATION BY MASS SPECTROMETRY</scope>
</reference>
<reference key="7">
    <citation type="journal article" date="2006" name="Mol. Biol. Cell">
        <title>Proteomic analysis of the yeast mitochondrial outer membrane reveals accumulation of a subclass of preproteins.</title>
        <authorList>
            <person name="Zahedi R.P."/>
            <person name="Sickmann A."/>
            <person name="Boehm A.M."/>
            <person name="Winkler C."/>
            <person name="Zufall N."/>
            <person name="Schoenfisch B."/>
            <person name="Guiard B."/>
            <person name="Pfanner N."/>
            <person name="Meisinger C."/>
        </authorList>
    </citation>
    <scope>SUBCELLULAR LOCATION</scope>
    <scope>IDENTIFICATION BY MASS SPECTROMETRY</scope>
</reference>
<reference key="8">
    <citation type="journal article" date="2007" name="J. Proteome Res.">
        <title>Large-scale phosphorylation analysis of alpha-factor-arrested Saccharomyces cerevisiae.</title>
        <authorList>
            <person name="Li X."/>
            <person name="Gerber S.A."/>
            <person name="Rudner A.D."/>
            <person name="Beausoleil S.A."/>
            <person name="Haas W."/>
            <person name="Villen J."/>
            <person name="Elias J.E."/>
            <person name="Gygi S.P."/>
        </authorList>
    </citation>
    <scope>PHOSPHORYLATION [LARGE SCALE ANALYSIS] AT SER-111</scope>
    <scope>IDENTIFICATION BY MASS SPECTROMETRY [LARGE SCALE ANALYSIS]</scope>
    <source>
        <strain>ADR376</strain>
    </source>
</reference>
<reference key="9">
    <citation type="journal article" date="2007" name="Proc. Natl. Acad. Sci. U.S.A.">
        <title>Analysis of phosphorylation sites on proteins from Saccharomyces cerevisiae by electron transfer dissociation (ETD) mass spectrometry.</title>
        <authorList>
            <person name="Chi A."/>
            <person name="Huttenhower C."/>
            <person name="Geer L.Y."/>
            <person name="Coon J.J."/>
            <person name="Syka J.E.P."/>
            <person name="Bai D.L."/>
            <person name="Shabanowitz J."/>
            <person name="Burke D.J."/>
            <person name="Troyanskaya O.G."/>
            <person name="Hunt D.F."/>
        </authorList>
    </citation>
    <scope>PHOSPHORYLATION [LARGE SCALE ANALYSIS] AT SER-111</scope>
    <scope>IDENTIFICATION BY MASS SPECTROMETRY [LARGE SCALE ANALYSIS]</scope>
</reference>
<reference key="10">
    <citation type="journal article" date="2008" name="Mol. Cell. Proteomics">
        <title>A multidimensional chromatography technology for in-depth phosphoproteome analysis.</title>
        <authorList>
            <person name="Albuquerque C.P."/>
            <person name="Smolka M.B."/>
            <person name="Payne S.H."/>
            <person name="Bafna V."/>
            <person name="Eng J."/>
            <person name="Zhou H."/>
        </authorList>
    </citation>
    <scope>PHOSPHORYLATION [LARGE SCALE ANALYSIS] AT SER-111</scope>
    <scope>IDENTIFICATION BY MASS SPECTROMETRY [LARGE SCALE ANALYSIS]</scope>
</reference>
<reference key="11">
    <citation type="journal article" date="2009" name="Science">
        <title>Global analysis of Cdk1 substrate phosphorylation sites provides insights into evolution.</title>
        <authorList>
            <person name="Holt L.J."/>
            <person name="Tuch B.B."/>
            <person name="Villen J."/>
            <person name="Johnson A.D."/>
            <person name="Gygi S.P."/>
            <person name="Morgan D.O."/>
        </authorList>
    </citation>
    <scope>PHOSPHORYLATION [LARGE SCALE ANALYSIS] AT SER-111</scope>
    <scope>IDENTIFICATION BY MASS SPECTROMETRY [LARGE SCALE ANALYSIS]</scope>
</reference>
<reference key="12">
    <citation type="journal article" date="2012" name="Mol. Cell">
        <title>The Sjogren-Larsson syndrome gene encodes a hexadecenal dehydrogenase of the sphingosine 1-phosphate degradation pathway.</title>
        <authorList>
            <person name="Nakahara K."/>
            <person name="Ohkuni A."/>
            <person name="Kitamura T."/>
            <person name="Abe K."/>
            <person name="Naganuma T."/>
            <person name="Ohno Y."/>
            <person name="Zoeller R.A."/>
            <person name="Kihara A."/>
        </authorList>
    </citation>
    <scope>FUNCTION</scope>
    <scope>CATALYTIC ACTIVITY</scope>
</reference>
<reference key="13">
    <citation type="journal article" date="2014" name="J. Lipid Res.">
        <title>High-confidence proteomic analysis of yeast lipid droplets identifies additional droplet proteins and reveals connections to dolichol synthesis and sterol acetylation.</title>
        <authorList>
            <person name="Currie E."/>
            <person name="Guo X."/>
            <person name="Christiano R."/>
            <person name="Chitraju C."/>
            <person name="Kory N."/>
            <person name="Harrison K."/>
            <person name="Haas J."/>
            <person name="Walther T.C."/>
            <person name="Farese R.V. Jr."/>
        </authorList>
    </citation>
    <scope>SUBCELLULAR LOCATION</scope>
</reference>
<reference key="14">
    <citation type="journal article" date="2016" name="Cell Chem. Biol.">
        <title>Mechanistic details of early steps in coenzyme Q biosynthesis pathway in yeast.</title>
        <authorList>
            <person name="Payet L.A."/>
            <person name="Leroux M."/>
            <person name="Willison J.C."/>
            <person name="Kihara A."/>
            <person name="Pelosi L."/>
            <person name="Pierrel F."/>
        </authorList>
    </citation>
    <scope>FUNCTION</scope>
    <scope>CATALYTIC ACTIVITY</scope>
    <scope>DISRUPTION PHENOTYPE</scope>
    <scope>MUTAGENESIS OF SER-241</scope>
</reference>
<reference key="15">
    <citation type="journal article" date="2016" name="Nat. Biotechnol.">
        <title>Mitochondrial protein functions elucidated by multi-omic mass spectrometry profiling.</title>
        <authorList>
            <person name="Stefely J.A."/>
            <person name="Kwiecien N.W."/>
            <person name="Freiberger E.C."/>
            <person name="Richards A.L."/>
            <person name="Jochem A."/>
            <person name="Rush M.J.P."/>
            <person name="Ulbrich A."/>
            <person name="Robinson K.P."/>
            <person name="Hutchins P.D."/>
            <person name="Veling M.T."/>
            <person name="Guo X."/>
            <person name="Kemmerer Z.A."/>
            <person name="Connors K.J."/>
            <person name="Trujillo E.A."/>
            <person name="Sokol J."/>
            <person name="Marx H."/>
            <person name="Westphall M.S."/>
            <person name="Hebert A.S."/>
            <person name="Pagliarini D.J."/>
            <person name="Coon J.J."/>
        </authorList>
    </citation>
    <scope>FUNCTION</scope>
    <scope>CATALYTIC ACTIVITY</scope>
    <scope>MUTAGENESIS OF CYS-273</scope>
</reference>
<accession>Q04458</accession>
<accession>D6VZT3</accession>
<evidence type="ECO:0000255" key="1"/>
<evidence type="ECO:0000255" key="2">
    <source>
        <dbReference type="PROSITE-ProRule" id="PRU10007"/>
    </source>
</evidence>
<evidence type="ECO:0000269" key="3">
    <source>
    </source>
</evidence>
<evidence type="ECO:0000269" key="4">
    <source>
    </source>
</evidence>
<evidence type="ECO:0000269" key="5">
    <source>
    </source>
</evidence>
<evidence type="ECO:0000269" key="6">
    <source>
    </source>
</evidence>
<evidence type="ECO:0000269" key="7">
    <source>
    </source>
</evidence>
<evidence type="ECO:0000269" key="8">
    <source>
    </source>
</evidence>
<evidence type="ECO:0000269" key="9">
    <source>
    </source>
</evidence>
<evidence type="ECO:0000269" key="10">
    <source>
    </source>
</evidence>
<evidence type="ECO:0000269" key="11">
    <source>
    </source>
</evidence>
<evidence type="ECO:0000305" key="12"/>
<evidence type="ECO:0000305" key="13">
    <source>
    </source>
</evidence>
<evidence type="ECO:0000305" key="14">
    <source>
    </source>
</evidence>
<evidence type="ECO:0000305" key="15">
    <source>
    </source>
</evidence>
<evidence type="ECO:0007744" key="16">
    <source>
    </source>
</evidence>
<evidence type="ECO:0007744" key="17">
    <source>
    </source>
</evidence>
<evidence type="ECO:0007744" key="18">
    <source>
    </source>
</evidence>
<evidence type="ECO:0007744" key="19">
    <source>
    </source>
</evidence>
<gene>
    <name type="primary">HFD1</name>
    <name type="ordered locus">YMR110C</name>
    <name type="ORF">YM9718.09C</name>
</gene>
<keyword id="KW-0967">Endosome</keyword>
<keyword id="KW-0551">Lipid droplet</keyword>
<keyword id="KW-0472">Membrane</keyword>
<keyword id="KW-0496">Mitochondrion</keyword>
<keyword id="KW-1000">Mitochondrion outer membrane</keyword>
<keyword id="KW-0520">NAD</keyword>
<keyword id="KW-0560">Oxidoreductase</keyword>
<keyword id="KW-0597">Phosphoprotein</keyword>
<keyword id="KW-1185">Reference proteome</keyword>
<keyword id="KW-0812">Transmembrane</keyword>
<keyword id="KW-1133">Transmembrane helix</keyword>
<comment type="function">
    <text evidence="8 10 11">Catalyzes the oxidation of long-chain aliphatic aldehydes to fatty acids. Responsible for conversion of the sphingosine 1-phosphate (S1P) degradation product hexadecenal to hexadecenoic acid (PubMed:22633490). Involved in coenzyme Q (CoQ) biosynthesis, catalyzing the last step in the tyrosine to 4-hydroxybenzoate (4-HB) pathway. Oxidizes 4-hydroxybenzaldehyde (4-Hbz) to 4-HB, the aromatic precursor for coenzyme Q (PubMed:27669165, PubMed:27693056).</text>
</comment>
<comment type="catalytic activity">
    <reaction evidence="8">
        <text>an aldehyde + NAD(+) + H2O = a carboxylate + NADH + 2 H(+)</text>
        <dbReference type="Rhea" id="RHEA:16185"/>
        <dbReference type="ChEBI" id="CHEBI:15377"/>
        <dbReference type="ChEBI" id="CHEBI:15378"/>
        <dbReference type="ChEBI" id="CHEBI:17478"/>
        <dbReference type="ChEBI" id="CHEBI:29067"/>
        <dbReference type="ChEBI" id="CHEBI:57540"/>
        <dbReference type="ChEBI" id="CHEBI:57945"/>
        <dbReference type="EC" id="1.2.1.3"/>
    </reaction>
</comment>
<comment type="catalytic activity">
    <reaction evidence="8">
        <text>hexadecanoate + NADH + 2 H(+) = hexadecanal + NAD(+) + H2O</text>
        <dbReference type="Rhea" id="RHEA:33739"/>
        <dbReference type="ChEBI" id="CHEBI:7896"/>
        <dbReference type="ChEBI" id="CHEBI:15377"/>
        <dbReference type="ChEBI" id="CHEBI:15378"/>
        <dbReference type="ChEBI" id="CHEBI:17600"/>
        <dbReference type="ChEBI" id="CHEBI:57540"/>
        <dbReference type="ChEBI" id="CHEBI:57945"/>
    </reaction>
    <physiologicalReaction direction="right-to-left" evidence="13">
        <dbReference type="Rhea" id="RHEA:33741"/>
    </physiologicalReaction>
</comment>
<comment type="catalytic activity">
    <reaction evidence="10 11">
        <text>4-hydroxybenzaldehyde + NAD(+) + H2O = 4-hydroxybenzoate + NADH + 2 H(+)</text>
        <dbReference type="Rhea" id="RHEA:20305"/>
        <dbReference type="ChEBI" id="CHEBI:15377"/>
        <dbReference type="ChEBI" id="CHEBI:15378"/>
        <dbReference type="ChEBI" id="CHEBI:17597"/>
        <dbReference type="ChEBI" id="CHEBI:17879"/>
        <dbReference type="ChEBI" id="CHEBI:57540"/>
        <dbReference type="ChEBI" id="CHEBI:57945"/>
        <dbReference type="EC" id="1.2.1.64"/>
    </reaction>
    <physiologicalReaction direction="left-to-right" evidence="14 15">
        <dbReference type="Rhea" id="RHEA:20306"/>
    </physiologicalReaction>
</comment>
<comment type="subcellular location">
    <subcellularLocation>
        <location evidence="9">Lipid droplet</location>
    </subcellularLocation>
    <subcellularLocation>
        <location evidence="5 6 7">Mitochondrion outer membrane</location>
        <topology evidence="1">Single-pass membrane protein</topology>
    </subcellularLocation>
    <subcellularLocation>
        <location evidence="3">Endosome membrane</location>
        <topology evidence="1">Single-pass membrane protein</topology>
    </subcellularLocation>
    <subcellularLocation>
        <location evidence="12">Cytoplasmic granule membrane</location>
        <topology evidence="1">Single-pass membrane protein</topology>
    </subcellularLocation>
</comment>
<comment type="disruption phenotype">
    <text evidence="11">Results in coenzyme Q deficiency.</text>
</comment>
<comment type="miscellaneous">
    <text evidence="4">Present with 2930 molecules/cell in log phase SD medium.</text>
</comment>
<comment type="similarity">
    <text evidence="12">Belongs to the aldehyde dehydrogenase family.</text>
</comment>
<organism>
    <name type="scientific">Saccharomyces cerevisiae (strain ATCC 204508 / S288c)</name>
    <name type="common">Baker's yeast</name>
    <dbReference type="NCBI Taxonomy" id="559292"/>
    <lineage>
        <taxon>Eukaryota</taxon>
        <taxon>Fungi</taxon>
        <taxon>Dikarya</taxon>
        <taxon>Ascomycota</taxon>
        <taxon>Saccharomycotina</taxon>
        <taxon>Saccharomycetes</taxon>
        <taxon>Saccharomycetales</taxon>
        <taxon>Saccharomycetaceae</taxon>
        <taxon>Saccharomyces</taxon>
    </lineage>
</organism>
<name>HFD1_YEAST</name>